<name>VE6_HPV26</name>
<gene>
    <name evidence="1" type="primary">E6</name>
</gene>
<proteinExistence type="inferred from homology"/>
<protein>
    <recommendedName>
        <fullName evidence="1">Protein E6</fullName>
    </recommendedName>
</protein>
<feature type="chain" id="PRO_0000133346" description="Protein E6">
    <location>
        <begin position="1"/>
        <end position="150"/>
    </location>
</feature>
<feature type="zinc finger region" evidence="1">
    <location>
        <begin position="30"/>
        <end position="66"/>
    </location>
</feature>
<feature type="zinc finger region" evidence="1">
    <location>
        <begin position="103"/>
        <end position="139"/>
    </location>
</feature>
<feature type="short sequence motif" description="PDZ-binding domain" evidence="1">
    <location>
        <begin position="148"/>
        <end position="150"/>
    </location>
</feature>
<organism>
    <name type="scientific">Human papillomavirus type 26</name>
    <dbReference type="NCBI Taxonomy" id="333762"/>
    <lineage>
        <taxon>Viruses</taxon>
        <taxon>Monodnaviria</taxon>
        <taxon>Shotokuvirae</taxon>
        <taxon>Cossaviricota</taxon>
        <taxon>Papovaviricetes</taxon>
        <taxon>Zurhausenvirales</taxon>
        <taxon>Papillomaviridae</taxon>
        <taxon>Firstpapillomavirinae</taxon>
        <taxon>Alphapapillomavirus</taxon>
        <taxon>Alphapapillomavirus 5</taxon>
    </lineage>
</organism>
<evidence type="ECO:0000255" key="1">
    <source>
        <dbReference type="HAMAP-Rule" id="MF_04006"/>
    </source>
</evidence>
<evidence type="ECO:0000305" key="2"/>
<comment type="function">
    <text evidence="1">Plays a major role in the induction and maintenance of cellular transformation. Acts mainly as an oncoprotein by stimulating the destruction of many host cell key regulatory proteins. E6 associates with host UBE3A/E6-AP ubiquitin-protein ligase, and inactivates tumor suppressors TP53 and TP73 by targeting them to the 26S proteasome for degradation. In turn, DNA damage and chromosomal instabilities increase and lead to cell proliferation and cancer development. The complex E6/E6AP targets several other substrates to degradation via the proteasome including host DLG1 or NFX1, a repressor of human telomerase reverse transcriptase (hTERT). The resulting increased expression of hTERT prevents the shortening of telomere length leading to cell immortalization. Other cellular targets including BAK1, Fas-associated death domain-containing protein (FADD) and procaspase 8, are degraded by E6/E6AP causing inhibition of apoptosis. E6 also inhibits immune response by interacting with host IRF3 and TYK2. These interactions prevent IRF3 transcriptional activities and inhibit TYK2-mediated JAK-STAT activation by interferon alpha resulting in inhibition of the interferon signaling pathway.</text>
</comment>
<comment type="subunit">
    <text evidence="1">Forms homodimers. Interacts with ubiquitin-protein ligase UBE3A/E6-AP and thus forms a complex with human TP53. Interacts with human NFX1 and MAGI3. Interacts with human IRF3; this interaction inhibits the establishment of antiviral state. Interacts with human TYK2; this interaction inhibits JAK-STAT activation by interferon alpha. Interacts with host DLG1; this interaction leads to the proteasomal degradation of DLG1.</text>
</comment>
<comment type="subcellular location">
    <subcellularLocation>
        <location evidence="1">Host cytoplasm</location>
    </subcellularLocation>
    <subcellularLocation>
        <location evidence="1">Host nucleus</location>
    </subcellularLocation>
</comment>
<comment type="miscellaneous">
    <text evidence="1">Belongs to the high risk human alphapapillomavirus family. The cancer-causing human papillomavirus E6 protein has a unique carboxy terminal PDZ domain containing substrate.</text>
</comment>
<comment type="similarity">
    <text evidence="2">Belongs to the papillomaviridae E6 protein family.</text>
</comment>
<sequence>MFEDPRERPRTLHELCESLNTTLQNLQVQCVYCKETLQWADVYNFAICDLRVVYRDRSPYAACKRCVIFYSKITEYRRYTCSVYGATLEALTKKSLCNLLIRCHRCQMPLGPEEKQRIVDEKRRFHEIAGQWKGLCTNCWRPRRQTETQV</sequence>
<reference key="1">
    <citation type="journal article" date="1994" name="Curr. Top. Microbiol. Immunol.">
        <title>Primer-directed sequencing of human papillomavirus types.</title>
        <authorList>
            <person name="Delius H."/>
            <person name="Hofmann B."/>
        </authorList>
    </citation>
    <scope>NUCLEOTIDE SEQUENCE [GENOMIC DNA]</scope>
</reference>
<keyword id="KW-0010">Activator</keyword>
<keyword id="KW-0238">DNA-binding</keyword>
<keyword id="KW-0244">Early protein</keyword>
<keyword id="KW-1035">Host cytoplasm</keyword>
<keyword id="KW-1048">Host nucleus</keyword>
<keyword id="KW-0945">Host-virus interaction</keyword>
<keyword id="KW-1090">Inhibition of host innate immune response by virus</keyword>
<keyword id="KW-1092">Inhibition of host IRF3 by virus</keyword>
<keyword id="KW-1113">Inhibition of host RLR pathway by virus</keyword>
<keyword id="KW-0479">Metal-binding</keyword>
<keyword id="KW-1119">Modulation of host cell apoptosis by virus</keyword>
<keyword id="KW-0553">Oncogene</keyword>
<keyword id="KW-1185">Reference proteome</keyword>
<keyword id="KW-0804">Transcription</keyword>
<keyword id="KW-0805">Transcription regulation</keyword>
<keyword id="KW-0899">Viral immunoevasion</keyword>
<keyword id="KW-0862">Zinc</keyword>
<keyword id="KW-0863">Zinc-finger</keyword>
<dbReference type="EMBL" id="X74472">
    <property type="protein sequence ID" value="CAA52530.1"/>
    <property type="molecule type" value="Genomic_DNA"/>
</dbReference>
<dbReference type="PIR" id="S36544">
    <property type="entry name" value="S36544"/>
</dbReference>
<dbReference type="RefSeq" id="NP_041782.1">
    <property type="nucleotide sequence ID" value="NC_001583.1"/>
</dbReference>
<dbReference type="SMR" id="P36807"/>
<dbReference type="BioGRID" id="4263564">
    <property type="interactions" value="6"/>
</dbReference>
<dbReference type="IntAct" id="P36807">
    <property type="interactions" value="1"/>
</dbReference>
<dbReference type="MINT" id="P36807"/>
<dbReference type="GeneID" id="1496946"/>
<dbReference type="KEGG" id="vg:1496946"/>
<dbReference type="OrthoDB" id="27353at10239"/>
<dbReference type="Proteomes" id="UP000009113">
    <property type="component" value="Genome"/>
</dbReference>
<dbReference type="GO" id="GO:0030430">
    <property type="term" value="C:host cell cytoplasm"/>
    <property type="evidence" value="ECO:0007669"/>
    <property type="project" value="UniProtKB-SubCell"/>
</dbReference>
<dbReference type="GO" id="GO:0042025">
    <property type="term" value="C:host cell nucleus"/>
    <property type="evidence" value="ECO:0007669"/>
    <property type="project" value="UniProtKB-SubCell"/>
</dbReference>
<dbReference type="GO" id="GO:0003677">
    <property type="term" value="F:DNA binding"/>
    <property type="evidence" value="ECO:0007669"/>
    <property type="project" value="UniProtKB-UniRule"/>
</dbReference>
<dbReference type="GO" id="GO:0030165">
    <property type="term" value="F:PDZ domain binding"/>
    <property type="evidence" value="ECO:0007669"/>
    <property type="project" value="UniProtKB-UniRule"/>
</dbReference>
<dbReference type="GO" id="GO:0008270">
    <property type="term" value="F:zinc ion binding"/>
    <property type="evidence" value="ECO:0007669"/>
    <property type="project" value="UniProtKB-KW"/>
</dbReference>
<dbReference type="GO" id="GO:0006351">
    <property type="term" value="P:DNA-templated transcription"/>
    <property type="evidence" value="ECO:0007669"/>
    <property type="project" value="UniProtKB-UniRule"/>
</dbReference>
<dbReference type="GO" id="GO:0006355">
    <property type="term" value="P:regulation of DNA-templated transcription"/>
    <property type="evidence" value="ECO:0007669"/>
    <property type="project" value="UniProtKB-UniRule"/>
</dbReference>
<dbReference type="GO" id="GO:0052150">
    <property type="term" value="P:symbiont-mediated perturbation of host apoptosis"/>
    <property type="evidence" value="ECO:0007669"/>
    <property type="project" value="UniProtKB-KW"/>
</dbReference>
<dbReference type="GO" id="GO:0039648">
    <property type="term" value="P:symbiont-mediated perturbation of host ubiquitin-like protein modification"/>
    <property type="evidence" value="ECO:0007669"/>
    <property type="project" value="UniProtKB-UniRule"/>
</dbReference>
<dbReference type="GO" id="GO:0039548">
    <property type="term" value="P:symbiont-mediated suppression of host cytoplasmic pattern recognition receptor signaling pathway via inhibition of IRF3 activity"/>
    <property type="evidence" value="ECO:0007669"/>
    <property type="project" value="UniProtKB-UniRule"/>
</dbReference>
<dbReference type="GO" id="GO:0039502">
    <property type="term" value="P:symbiont-mediated suppression of host type I interferon-mediated signaling pathway"/>
    <property type="evidence" value="ECO:0007669"/>
    <property type="project" value="UniProtKB-UniRule"/>
</dbReference>
<dbReference type="FunFam" id="3.30.240.40:FF:000001">
    <property type="entry name" value="Protein E6"/>
    <property type="match status" value="1"/>
</dbReference>
<dbReference type="FunFam" id="3.30.240.40:FF:000002">
    <property type="entry name" value="Protein E6"/>
    <property type="match status" value="1"/>
</dbReference>
<dbReference type="Gene3D" id="3.30.240.40">
    <property type="entry name" value="E6 early regulatory protein"/>
    <property type="match status" value="2"/>
</dbReference>
<dbReference type="HAMAP" id="MF_04006">
    <property type="entry name" value="HPV_E6"/>
    <property type="match status" value="1"/>
</dbReference>
<dbReference type="InterPro" id="IPR001334">
    <property type="entry name" value="E6"/>
</dbReference>
<dbReference type="InterPro" id="IPR038575">
    <property type="entry name" value="E6_sf"/>
</dbReference>
<dbReference type="Pfam" id="PF00518">
    <property type="entry name" value="E6"/>
    <property type="match status" value="1"/>
</dbReference>
<dbReference type="SUPFAM" id="SSF161229">
    <property type="entry name" value="E6 C-terminal domain-like"/>
    <property type="match status" value="2"/>
</dbReference>
<organismHost>
    <name type="scientific">Homo sapiens</name>
    <name type="common">Human</name>
    <dbReference type="NCBI Taxonomy" id="9606"/>
</organismHost>
<accession>P36807</accession>